<feature type="chain" id="PRO_0000413182" description="Modulator protein MzrA">
    <location>
        <begin position="1"/>
        <end position="127"/>
    </location>
</feature>
<feature type="topological domain" description="Cytoplasmic" evidence="1">
    <location>
        <begin position="1"/>
        <end position="10"/>
    </location>
</feature>
<feature type="transmembrane region" description="Helical" evidence="1">
    <location>
        <begin position="11"/>
        <end position="31"/>
    </location>
</feature>
<feature type="topological domain" description="Periplasmic" evidence="1">
    <location>
        <begin position="32"/>
        <end position="127"/>
    </location>
</feature>
<proteinExistence type="inferred from homology"/>
<name>MZRA_ENTLS</name>
<protein>
    <recommendedName>
        <fullName evidence="1">Modulator protein MzrA</fullName>
    </recommendedName>
</protein>
<gene>
    <name evidence="1" type="primary">mzrA</name>
    <name type="ordered locus">Entcl_0600</name>
</gene>
<sequence length="127" mass="14222">MGLQNMTLRRFTLSMSALLLLCALLWLWAALEQQESSLAIRPVTPNTSMPDGFSIWHHLDANGIRFKSITPQDDALVIKFESSEQSAAAKEVLDRSLPHGYVIALQEDDAIAPQWLSRLRDAPHRLG</sequence>
<reference key="1">
    <citation type="journal article" date="2011" name="Stand. Genomic Sci.">
        <title>Complete genome sequence of 'Enterobacter lignolyticus' SCF1.</title>
        <authorList>
            <person name="Deangelis K.M."/>
            <person name="D'Haeseleer P."/>
            <person name="Chivian D."/>
            <person name="Fortney J.L."/>
            <person name="Khudyakov J."/>
            <person name="Simmons B."/>
            <person name="Woo H."/>
            <person name="Arkin A.P."/>
            <person name="Davenport K.W."/>
            <person name="Goodwin L."/>
            <person name="Chen A."/>
            <person name="Ivanova N."/>
            <person name="Kyrpides N.C."/>
            <person name="Mavromatis K."/>
            <person name="Woyke T."/>
            <person name="Hazen T.C."/>
        </authorList>
    </citation>
    <scope>NUCLEOTIDE SEQUENCE [LARGE SCALE GENOMIC DNA]</scope>
    <source>
        <strain>SCF1</strain>
    </source>
</reference>
<dbReference type="EMBL" id="CP002272">
    <property type="protein sequence ID" value="ADO46877.1"/>
    <property type="molecule type" value="Genomic_DNA"/>
</dbReference>
<dbReference type="RefSeq" id="WP_013364630.1">
    <property type="nucleotide sequence ID" value="NC_014618.1"/>
</dbReference>
<dbReference type="SMR" id="E3G1S2"/>
<dbReference type="STRING" id="701347.Entcl_0600"/>
<dbReference type="KEGG" id="esc:Entcl_0600"/>
<dbReference type="eggNOG" id="ENOG50333DY">
    <property type="taxonomic scope" value="Bacteria"/>
</dbReference>
<dbReference type="HOGENOM" id="CLU_153761_0_0_6"/>
<dbReference type="Proteomes" id="UP000006872">
    <property type="component" value="Chromosome"/>
</dbReference>
<dbReference type="GO" id="GO:0005886">
    <property type="term" value="C:plasma membrane"/>
    <property type="evidence" value="ECO:0007669"/>
    <property type="project" value="UniProtKB-SubCell"/>
</dbReference>
<dbReference type="GO" id="GO:0019901">
    <property type="term" value="F:protein kinase binding"/>
    <property type="evidence" value="ECO:0007669"/>
    <property type="project" value="UniProtKB-UniRule"/>
</dbReference>
<dbReference type="Gene3D" id="3.30.70.260">
    <property type="match status" value="1"/>
</dbReference>
<dbReference type="HAMAP" id="MF_00904">
    <property type="entry name" value="Modulator_MzrA"/>
    <property type="match status" value="1"/>
</dbReference>
<dbReference type="InterPro" id="IPR026574">
    <property type="entry name" value="Modulator_MzrA"/>
</dbReference>
<dbReference type="InterPro" id="IPR027398">
    <property type="entry name" value="SecD-TM"/>
</dbReference>
<dbReference type="NCBIfam" id="NF007915">
    <property type="entry name" value="PRK10629.1"/>
    <property type="match status" value="1"/>
</dbReference>
<dbReference type="Pfam" id="PF13721">
    <property type="entry name" value="SecD-TM1"/>
    <property type="match status" value="1"/>
</dbReference>
<organism>
    <name type="scientific">Enterobacter lignolyticus (strain SCF1)</name>
    <dbReference type="NCBI Taxonomy" id="701347"/>
    <lineage>
        <taxon>Bacteria</taxon>
        <taxon>Pseudomonadati</taxon>
        <taxon>Pseudomonadota</taxon>
        <taxon>Gammaproteobacteria</taxon>
        <taxon>Enterobacterales</taxon>
        <taxon>Enterobacteriaceae</taxon>
        <taxon>Pluralibacter</taxon>
    </lineage>
</organism>
<evidence type="ECO:0000255" key="1">
    <source>
        <dbReference type="HAMAP-Rule" id="MF_00904"/>
    </source>
</evidence>
<comment type="function">
    <text evidence="1">Modulates the activity of the EnvZ/OmpR two-component regulatory system, probably by directly modulating EnvZ enzymatic activity and increasing stability of phosphorylated OmpR.</text>
</comment>
<comment type="subunit">
    <text evidence="1">Interacts with EnvZ.</text>
</comment>
<comment type="subcellular location">
    <subcellularLocation>
        <location evidence="1">Cell inner membrane</location>
        <topology evidence="1">Single-pass membrane protein</topology>
    </subcellularLocation>
</comment>
<comment type="similarity">
    <text evidence="1">Belongs to the MzrA family.</text>
</comment>
<keyword id="KW-0997">Cell inner membrane</keyword>
<keyword id="KW-1003">Cell membrane</keyword>
<keyword id="KW-0472">Membrane</keyword>
<keyword id="KW-1185">Reference proteome</keyword>
<keyword id="KW-0812">Transmembrane</keyword>
<keyword id="KW-1133">Transmembrane helix</keyword>
<accession>E3G1S2</accession>